<organism>
    <name type="scientific">Xylella fastidiosa (strain 9a5c)</name>
    <dbReference type="NCBI Taxonomy" id="160492"/>
    <lineage>
        <taxon>Bacteria</taxon>
        <taxon>Pseudomonadati</taxon>
        <taxon>Pseudomonadota</taxon>
        <taxon>Gammaproteobacteria</taxon>
        <taxon>Lysobacterales</taxon>
        <taxon>Lysobacteraceae</taxon>
        <taxon>Xylella</taxon>
    </lineage>
</organism>
<accession>Q9PC78</accession>
<keyword id="KW-0997">Cell inner membrane</keyword>
<keyword id="KW-1003">Cell membrane</keyword>
<keyword id="KW-0406">Ion transport</keyword>
<keyword id="KW-0472">Membrane</keyword>
<keyword id="KW-0630">Potassium</keyword>
<keyword id="KW-0633">Potassium transport</keyword>
<keyword id="KW-0769">Symport</keyword>
<keyword id="KW-0812">Transmembrane</keyword>
<keyword id="KW-1133">Transmembrane helix</keyword>
<keyword id="KW-0813">Transport</keyword>
<reference key="1">
    <citation type="journal article" date="2000" name="Nature">
        <title>The genome sequence of the plant pathogen Xylella fastidiosa.</title>
        <authorList>
            <person name="Simpson A.J.G."/>
            <person name="Reinach F.C."/>
            <person name="Arruda P."/>
            <person name="Abreu F.A."/>
            <person name="Acencio M."/>
            <person name="Alvarenga R."/>
            <person name="Alves L.M.C."/>
            <person name="Araya J.E."/>
            <person name="Baia G.S."/>
            <person name="Baptista C.S."/>
            <person name="Barros M.H."/>
            <person name="Bonaccorsi E.D."/>
            <person name="Bordin S."/>
            <person name="Bove J.M."/>
            <person name="Briones M.R.S."/>
            <person name="Bueno M.R.P."/>
            <person name="Camargo A.A."/>
            <person name="Camargo L.E.A."/>
            <person name="Carraro D.M."/>
            <person name="Carrer H."/>
            <person name="Colauto N.B."/>
            <person name="Colombo C."/>
            <person name="Costa F.F."/>
            <person name="Costa M.C.R."/>
            <person name="Costa-Neto C.M."/>
            <person name="Coutinho L.L."/>
            <person name="Cristofani M."/>
            <person name="Dias-Neto E."/>
            <person name="Docena C."/>
            <person name="El-Dorry H."/>
            <person name="Facincani A.P."/>
            <person name="Ferreira A.J.S."/>
            <person name="Ferreira V.C.A."/>
            <person name="Ferro J.A."/>
            <person name="Fraga J.S."/>
            <person name="Franca S.C."/>
            <person name="Franco M.C."/>
            <person name="Frohme M."/>
            <person name="Furlan L.R."/>
            <person name="Garnier M."/>
            <person name="Goldman G.H."/>
            <person name="Goldman M.H.S."/>
            <person name="Gomes S.L."/>
            <person name="Gruber A."/>
            <person name="Ho P.L."/>
            <person name="Hoheisel J.D."/>
            <person name="Junqueira M.L."/>
            <person name="Kemper E.L."/>
            <person name="Kitajima J.P."/>
            <person name="Krieger J.E."/>
            <person name="Kuramae E.E."/>
            <person name="Laigret F."/>
            <person name="Lambais M.R."/>
            <person name="Leite L.C.C."/>
            <person name="Lemos E.G.M."/>
            <person name="Lemos M.V.F."/>
            <person name="Lopes S.A."/>
            <person name="Lopes C.R."/>
            <person name="Machado J.A."/>
            <person name="Machado M.A."/>
            <person name="Madeira A.M.B.N."/>
            <person name="Madeira H.M.F."/>
            <person name="Marino C.L."/>
            <person name="Marques M.V."/>
            <person name="Martins E.A.L."/>
            <person name="Martins E.M.F."/>
            <person name="Matsukuma A.Y."/>
            <person name="Menck C.F.M."/>
            <person name="Miracca E.C."/>
            <person name="Miyaki C.Y."/>
            <person name="Monteiro-Vitorello C.B."/>
            <person name="Moon D.H."/>
            <person name="Nagai M.A."/>
            <person name="Nascimento A.L.T.O."/>
            <person name="Netto L.E.S."/>
            <person name="Nhani A. Jr."/>
            <person name="Nobrega F.G."/>
            <person name="Nunes L.R."/>
            <person name="Oliveira M.A."/>
            <person name="de Oliveira M.C."/>
            <person name="de Oliveira R.C."/>
            <person name="Palmieri D.A."/>
            <person name="Paris A."/>
            <person name="Peixoto B.R."/>
            <person name="Pereira G.A.G."/>
            <person name="Pereira H.A. Jr."/>
            <person name="Pesquero J.B."/>
            <person name="Quaggio R.B."/>
            <person name="Roberto P.G."/>
            <person name="Rodrigues V."/>
            <person name="de Rosa A.J.M."/>
            <person name="de Rosa V.E. Jr."/>
            <person name="de Sa R.G."/>
            <person name="Santelli R.V."/>
            <person name="Sawasaki H.E."/>
            <person name="da Silva A.C.R."/>
            <person name="da Silva A.M."/>
            <person name="da Silva F.R."/>
            <person name="Silva W.A. Jr."/>
            <person name="da Silveira J.F."/>
            <person name="Silvestri M.L.Z."/>
            <person name="Siqueira W.J."/>
            <person name="de Souza A.A."/>
            <person name="de Souza A.P."/>
            <person name="Terenzi M.F."/>
            <person name="Truffi D."/>
            <person name="Tsai S.M."/>
            <person name="Tsuhako M.H."/>
            <person name="Vallada H."/>
            <person name="Van Sluys M.A."/>
            <person name="Verjovski-Almeida S."/>
            <person name="Vettore A.L."/>
            <person name="Zago M.A."/>
            <person name="Zatz M."/>
            <person name="Meidanis J."/>
            <person name="Setubal J.C."/>
        </authorList>
    </citation>
    <scope>NUCLEOTIDE SEQUENCE [LARGE SCALE GENOMIC DNA]</scope>
    <source>
        <strain>9a5c</strain>
    </source>
</reference>
<dbReference type="EMBL" id="AE003849">
    <property type="protein sequence ID" value="AAF84709.1"/>
    <property type="molecule type" value="Genomic_DNA"/>
</dbReference>
<dbReference type="PIR" id="F82623">
    <property type="entry name" value="F82623"/>
</dbReference>
<dbReference type="RefSeq" id="WP_010894369.1">
    <property type="nucleotide sequence ID" value="NC_002488.3"/>
</dbReference>
<dbReference type="STRING" id="160492.XF_1903"/>
<dbReference type="KEGG" id="xfa:XF_1903"/>
<dbReference type="eggNOG" id="COG3158">
    <property type="taxonomic scope" value="Bacteria"/>
</dbReference>
<dbReference type="HOGENOM" id="CLU_008142_4_2_6"/>
<dbReference type="Proteomes" id="UP000000812">
    <property type="component" value="Chromosome"/>
</dbReference>
<dbReference type="GO" id="GO:0005886">
    <property type="term" value="C:plasma membrane"/>
    <property type="evidence" value="ECO:0007669"/>
    <property type="project" value="UniProtKB-SubCell"/>
</dbReference>
<dbReference type="GO" id="GO:0015079">
    <property type="term" value="F:potassium ion transmembrane transporter activity"/>
    <property type="evidence" value="ECO:0007669"/>
    <property type="project" value="UniProtKB-UniRule"/>
</dbReference>
<dbReference type="GO" id="GO:0015293">
    <property type="term" value="F:symporter activity"/>
    <property type="evidence" value="ECO:0007669"/>
    <property type="project" value="UniProtKB-UniRule"/>
</dbReference>
<dbReference type="HAMAP" id="MF_01522">
    <property type="entry name" value="Kup"/>
    <property type="match status" value="1"/>
</dbReference>
<dbReference type="InterPro" id="IPR003855">
    <property type="entry name" value="K+_transporter"/>
</dbReference>
<dbReference type="InterPro" id="IPR053952">
    <property type="entry name" value="K_trans_C"/>
</dbReference>
<dbReference type="InterPro" id="IPR053951">
    <property type="entry name" value="K_trans_N"/>
</dbReference>
<dbReference type="InterPro" id="IPR023051">
    <property type="entry name" value="Kup"/>
</dbReference>
<dbReference type="PANTHER" id="PTHR30540:SF79">
    <property type="entry name" value="LOW AFFINITY POTASSIUM TRANSPORT SYSTEM PROTEIN KUP"/>
    <property type="match status" value="1"/>
</dbReference>
<dbReference type="PANTHER" id="PTHR30540">
    <property type="entry name" value="OSMOTIC STRESS POTASSIUM TRANSPORTER"/>
    <property type="match status" value="1"/>
</dbReference>
<dbReference type="Pfam" id="PF02705">
    <property type="entry name" value="K_trans"/>
    <property type="match status" value="1"/>
</dbReference>
<dbReference type="Pfam" id="PF22776">
    <property type="entry name" value="K_trans_C"/>
    <property type="match status" value="1"/>
</dbReference>
<evidence type="ECO:0000255" key="1">
    <source>
        <dbReference type="HAMAP-Rule" id="MF_01522"/>
    </source>
</evidence>
<name>KUP_XYLFA</name>
<sequence>MSTSSHSGDCTAVPSNSNGTIILSAIGVVFGDIGTSPLYTLKEAFSPNYGLTPNHDTVLGILSLIFWAMMLVVTIKYVAVIMRVDNDGEGGIMALTALTQRTMPFGSRSIYIVGILGIFGTSLFFGDGVITPAISVLSAVEGLEVAEPHMKAFVVPITLAVLILLFLCQRFGTERVGKTFGPITLLWFIAIGVVGVYNIAQAPEVLHAINPSWGLHFFLEHGWHSMFVLGAVVLAVTGGEALYADMGHFGAKAIRHAWMYVVLPMLALNYLGQGALVLSNPTAIGNPFYQSIPDWGLYPMIALATAAAVIASQALITGSYSLSSQAMQLGYIPRMNVRHTSQSTIGQIYVPTVNWTLLTLVILTVIGFGDSTSMASAYGVAVTGTMMITTVLMIIYARANPRVPRLMLWMMAIVFIAVDGAFFYANIIKFMDGAWFPLLLGVVIFTFMRTWLRGRKLLHEEMRKDGINLDNFLPGLMLAPPVKVPGTAVFLTADSTVVPHALMHNLKHNKVLHERNVFLTVKTLKIPYAANSERLKIEPISNGFYRVHIRFGFMETPDVPSALMCSKDHAGIDFDPMHTTFFVSRETVIPSANRGMPIWRDKLFVLMHRNAAPANAFFRIPGNRLVELGAQVEI</sequence>
<feature type="chain" id="PRO_0000209071" description="Probable potassium transport system protein Kup">
    <location>
        <begin position="1"/>
        <end position="634"/>
    </location>
</feature>
<feature type="transmembrane region" description="Helical" evidence="1">
    <location>
        <begin position="21"/>
        <end position="41"/>
    </location>
</feature>
<feature type="transmembrane region" description="Helical" evidence="1">
    <location>
        <begin position="61"/>
        <end position="81"/>
    </location>
</feature>
<feature type="transmembrane region" description="Helical" evidence="1">
    <location>
        <begin position="110"/>
        <end position="130"/>
    </location>
</feature>
<feature type="transmembrane region" description="Helical" evidence="1">
    <location>
        <begin position="148"/>
        <end position="168"/>
    </location>
</feature>
<feature type="transmembrane region" description="Helical" evidence="1">
    <location>
        <begin position="180"/>
        <end position="200"/>
    </location>
</feature>
<feature type="transmembrane region" description="Helical" evidence="1">
    <location>
        <begin position="217"/>
        <end position="237"/>
    </location>
</feature>
<feature type="transmembrane region" description="Helical" evidence="1">
    <location>
        <begin position="258"/>
        <end position="278"/>
    </location>
</feature>
<feature type="transmembrane region" description="Helical" evidence="1">
    <location>
        <begin position="296"/>
        <end position="316"/>
    </location>
</feature>
<feature type="transmembrane region" description="Helical" evidence="1">
    <location>
        <begin position="348"/>
        <end position="368"/>
    </location>
</feature>
<feature type="transmembrane region" description="Helical" evidence="1">
    <location>
        <begin position="377"/>
        <end position="397"/>
    </location>
</feature>
<feature type="transmembrane region" description="Helical" evidence="1">
    <location>
        <begin position="408"/>
        <end position="428"/>
    </location>
</feature>
<feature type="transmembrane region" description="Helical" evidence="1">
    <location>
        <begin position="432"/>
        <end position="452"/>
    </location>
</feature>
<proteinExistence type="inferred from homology"/>
<comment type="function">
    <text evidence="1">Transport of potassium into the cell. Likely operates as a K(+):H(+) symporter.</text>
</comment>
<comment type="catalytic activity">
    <reaction evidence="1">
        <text>K(+)(in) + H(+)(in) = K(+)(out) + H(+)(out)</text>
        <dbReference type="Rhea" id="RHEA:28490"/>
        <dbReference type="ChEBI" id="CHEBI:15378"/>
        <dbReference type="ChEBI" id="CHEBI:29103"/>
    </reaction>
    <physiologicalReaction direction="right-to-left" evidence="1">
        <dbReference type="Rhea" id="RHEA:28492"/>
    </physiologicalReaction>
</comment>
<comment type="subcellular location">
    <subcellularLocation>
        <location evidence="1">Cell inner membrane</location>
        <topology evidence="1">Multi-pass membrane protein</topology>
    </subcellularLocation>
</comment>
<comment type="similarity">
    <text evidence="1">Belongs to the HAK/KUP transporter (TC 2.A.72) family.</text>
</comment>
<protein>
    <recommendedName>
        <fullName evidence="1">Probable potassium transport system protein Kup</fullName>
    </recommendedName>
</protein>
<gene>
    <name evidence="1" type="primary">kup</name>
    <name type="ordered locus">XF_1903</name>
</gene>